<dbReference type="EC" id="2.7.7.6" evidence="1"/>
<dbReference type="EMBL" id="CP001020">
    <property type="protein sequence ID" value="ACJ19741.1"/>
    <property type="molecule type" value="Genomic_DNA"/>
</dbReference>
<dbReference type="RefSeq" id="WP_005771496.1">
    <property type="nucleotide sequence ID" value="NC_011528.1"/>
</dbReference>
<dbReference type="SMR" id="B6J5F7"/>
<dbReference type="KEGG" id="cbc:CbuK_0458"/>
<dbReference type="HOGENOM" id="CLU_053084_0_0_6"/>
<dbReference type="GO" id="GO:0005737">
    <property type="term" value="C:cytoplasm"/>
    <property type="evidence" value="ECO:0007669"/>
    <property type="project" value="UniProtKB-ARBA"/>
</dbReference>
<dbReference type="GO" id="GO:0000428">
    <property type="term" value="C:DNA-directed RNA polymerase complex"/>
    <property type="evidence" value="ECO:0007669"/>
    <property type="project" value="UniProtKB-KW"/>
</dbReference>
<dbReference type="GO" id="GO:0003677">
    <property type="term" value="F:DNA binding"/>
    <property type="evidence" value="ECO:0007669"/>
    <property type="project" value="UniProtKB-UniRule"/>
</dbReference>
<dbReference type="GO" id="GO:0003899">
    <property type="term" value="F:DNA-directed RNA polymerase activity"/>
    <property type="evidence" value="ECO:0007669"/>
    <property type="project" value="UniProtKB-UniRule"/>
</dbReference>
<dbReference type="GO" id="GO:0046983">
    <property type="term" value="F:protein dimerization activity"/>
    <property type="evidence" value="ECO:0007669"/>
    <property type="project" value="InterPro"/>
</dbReference>
<dbReference type="GO" id="GO:0006351">
    <property type="term" value="P:DNA-templated transcription"/>
    <property type="evidence" value="ECO:0007669"/>
    <property type="project" value="UniProtKB-UniRule"/>
</dbReference>
<dbReference type="CDD" id="cd06928">
    <property type="entry name" value="RNAP_alpha_NTD"/>
    <property type="match status" value="1"/>
</dbReference>
<dbReference type="FunFam" id="1.10.150.20:FF:000001">
    <property type="entry name" value="DNA-directed RNA polymerase subunit alpha"/>
    <property type="match status" value="1"/>
</dbReference>
<dbReference type="FunFam" id="2.170.120.12:FF:000001">
    <property type="entry name" value="DNA-directed RNA polymerase subunit alpha"/>
    <property type="match status" value="1"/>
</dbReference>
<dbReference type="Gene3D" id="1.10.150.20">
    <property type="entry name" value="5' to 3' exonuclease, C-terminal subdomain"/>
    <property type="match status" value="1"/>
</dbReference>
<dbReference type="Gene3D" id="2.170.120.12">
    <property type="entry name" value="DNA-directed RNA polymerase, insert domain"/>
    <property type="match status" value="1"/>
</dbReference>
<dbReference type="Gene3D" id="3.30.1360.10">
    <property type="entry name" value="RNA polymerase, RBP11-like subunit"/>
    <property type="match status" value="1"/>
</dbReference>
<dbReference type="HAMAP" id="MF_00059">
    <property type="entry name" value="RNApol_bact_RpoA"/>
    <property type="match status" value="1"/>
</dbReference>
<dbReference type="InterPro" id="IPR011262">
    <property type="entry name" value="DNA-dir_RNA_pol_insert"/>
</dbReference>
<dbReference type="InterPro" id="IPR011263">
    <property type="entry name" value="DNA-dir_RNA_pol_RpoA/D/Rpb3"/>
</dbReference>
<dbReference type="InterPro" id="IPR011773">
    <property type="entry name" value="DNA-dir_RpoA"/>
</dbReference>
<dbReference type="InterPro" id="IPR036603">
    <property type="entry name" value="RBP11-like"/>
</dbReference>
<dbReference type="InterPro" id="IPR011260">
    <property type="entry name" value="RNAP_asu_C"/>
</dbReference>
<dbReference type="InterPro" id="IPR036643">
    <property type="entry name" value="RNApol_insert_sf"/>
</dbReference>
<dbReference type="NCBIfam" id="NF003513">
    <property type="entry name" value="PRK05182.1-2"/>
    <property type="match status" value="1"/>
</dbReference>
<dbReference type="NCBIfam" id="NF003519">
    <property type="entry name" value="PRK05182.2-5"/>
    <property type="match status" value="1"/>
</dbReference>
<dbReference type="NCBIfam" id="TIGR02027">
    <property type="entry name" value="rpoA"/>
    <property type="match status" value="1"/>
</dbReference>
<dbReference type="Pfam" id="PF01000">
    <property type="entry name" value="RNA_pol_A_bac"/>
    <property type="match status" value="1"/>
</dbReference>
<dbReference type="Pfam" id="PF03118">
    <property type="entry name" value="RNA_pol_A_CTD"/>
    <property type="match status" value="1"/>
</dbReference>
<dbReference type="Pfam" id="PF01193">
    <property type="entry name" value="RNA_pol_L"/>
    <property type="match status" value="1"/>
</dbReference>
<dbReference type="SMART" id="SM00662">
    <property type="entry name" value="RPOLD"/>
    <property type="match status" value="1"/>
</dbReference>
<dbReference type="SUPFAM" id="SSF47789">
    <property type="entry name" value="C-terminal domain of RNA polymerase alpha subunit"/>
    <property type="match status" value="1"/>
</dbReference>
<dbReference type="SUPFAM" id="SSF56553">
    <property type="entry name" value="Insert subdomain of RNA polymerase alpha subunit"/>
    <property type="match status" value="1"/>
</dbReference>
<dbReference type="SUPFAM" id="SSF55257">
    <property type="entry name" value="RBP11-like subunits of RNA polymerase"/>
    <property type="match status" value="1"/>
</dbReference>
<reference key="1">
    <citation type="journal article" date="2009" name="Infect. Immun.">
        <title>Comparative genomics reveal extensive transposon-mediated genomic plasticity and diversity among potential effector proteins within the genus Coxiella.</title>
        <authorList>
            <person name="Beare P.A."/>
            <person name="Unsworth N."/>
            <person name="Andoh M."/>
            <person name="Voth D.E."/>
            <person name="Omsland A."/>
            <person name="Gilk S.D."/>
            <person name="Williams K.P."/>
            <person name="Sobral B.W."/>
            <person name="Kupko J.J. III"/>
            <person name="Porcella S.F."/>
            <person name="Samuel J.E."/>
            <person name="Heinzen R.A."/>
        </authorList>
    </citation>
    <scope>NUCLEOTIDE SEQUENCE [LARGE SCALE GENOMIC DNA]</scope>
    <source>
        <strain>CbuK_Q154</strain>
    </source>
</reference>
<name>RPOA_COXB1</name>
<sequence length="327" mass="35556">MQNVLKSFLTPKNIQVQTISPCHFRILLEPLERGFGHTLGNALRRILLSSMPGAAIVQAEIDGVLHEYSSIEGVREDVVDVLLNLKGVAIKLEGREDAKLTLHKKGAGTVTAGDIQTESGVKIVNPDHVIAHITKDGEINMTLKAAMGRGYEPSSARSTGDQSRSVGLLLLDASYSPIRRVTYSVENARVEKRTDLDKLIIDLETDGTLDPEEAIRFAAAVLQHQLAAFVDLKQESDRDGGGKEGKVNPLLLRPVEDLELTVRAANCLKAESINYIGDLVQCTENDLLKTPNLGKKSLLEIKSVLAQKGLSLGMDLKGWPPADLTDQ</sequence>
<proteinExistence type="inferred from homology"/>
<accession>B6J5F7</accession>
<keyword id="KW-0240">DNA-directed RNA polymerase</keyword>
<keyword id="KW-0548">Nucleotidyltransferase</keyword>
<keyword id="KW-0804">Transcription</keyword>
<keyword id="KW-0808">Transferase</keyword>
<comment type="function">
    <text evidence="1">DNA-dependent RNA polymerase catalyzes the transcription of DNA into RNA using the four ribonucleoside triphosphates as substrates.</text>
</comment>
<comment type="catalytic activity">
    <reaction evidence="1">
        <text>RNA(n) + a ribonucleoside 5'-triphosphate = RNA(n+1) + diphosphate</text>
        <dbReference type="Rhea" id="RHEA:21248"/>
        <dbReference type="Rhea" id="RHEA-COMP:14527"/>
        <dbReference type="Rhea" id="RHEA-COMP:17342"/>
        <dbReference type="ChEBI" id="CHEBI:33019"/>
        <dbReference type="ChEBI" id="CHEBI:61557"/>
        <dbReference type="ChEBI" id="CHEBI:140395"/>
        <dbReference type="EC" id="2.7.7.6"/>
    </reaction>
</comment>
<comment type="subunit">
    <text evidence="1">Homodimer. The RNAP catalytic core consists of 2 alpha, 1 beta, 1 beta' and 1 omega subunit. When a sigma factor is associated with the core the holoenzyme is formed, which can initiate transcription.</text>
</comment>
<comment type="domain">
    <text evidence="1">The N-terminal domain is essential for RNAP assembly and basal transcription, whereas the C-terminal domain is involved in interaction with transcriptional regulators and with upstream promoter elements.</text>
</comment>
<comment type="similarity">
    <text evidence="1">Belongs to the RNA polymerase alpha chain family.</text>
</comment>
<gene>
    <name evidence="1" type="primary">rpoA</name>
    <name type="ordered locus">CbuK_0458</name>
</gene>
<evidence type="ECO:0000255" key="1">
    <source>
        <dbReference type="HAMAP-Rule" id="MF_00059"/>
    </source>
</evidence>
<organism>
    <name type="scientific">Coxiella burnetii (strain CbuK_Q154)</name>
    <name type="common">Coxiella burnetii (strain Q154)</name>
    <dbReference type="NCBI Taxonomy" id="434924"/>
    <lineage>
        <taxon>Bacteria</taxon>
        <taxon>Pseudomonadati</taxon>
        <taxon>Pseudomonadota</taxon>
        <taxon>Gammaproteobacteria</taxon>
        <taxon>Legionellales</taxon>
        <taxon>Coxiellaceae</taxon>
        <taxon>Coxiella</taxon>
    </lineage>
</organism>
<protein>
    <recommendedName>
        <fullName evidence="1">DNA-directed RNA polymerase subunit alpha</fullName>
        <shortName evidence="1">RNAP subunit alpha</shortName>
        <ecNumber evidence="1">2.7.7.6</ecNumber>
    </recommendedName>
    <alternativeName>
        <fullName evidence="1">RNA polymerase subunit alpha</fullName>
    </alternativeName>
    <alternativeName>
        <fullName evidence="1">Transcriptase subunit alpha</fullName>
    </alternativeName>
</protein>
<feature type="chain" id="PRO_1000091942" description="DNA-directed RNA polymerase subunit alpha">
    <location>
        <begin position="1"/>
        <end position="327"/>
    </location>
</feature>
<feature type="region of interest" description="Alpha N-terminal domain (alpha-NTD)" evidence="1">
    <location>
        <begin position="1"/>
        <end position="233"/>
    </location>
</feature>
<feature type="region of interest" description="Alpha C-terminal domain (alpha-CTD)" evidence="1">
    <location>
        <begin position="247"/>
        <end position="327"/>
    </location>
</feature>